<protein>
    <recommendedName>
        <fullName evidence="1">Flagellar transcriptional regulator FlhD</fullName>
    </recommendedName>
</protein>
<accession>Q44730</accession>
<organism>
    <name type="scientific">Bordetella bronchiseptica (strain ATCC BAA-588 / NCTC 13252 / RB50)</name>
    <name type="common">Alcaligenes bronchisepticus</name>
    <dbReference type="NCBI Taxonomy" id="257310"/>
    <lineage>
        <taxon>Bacteria</taxon>
        <taxon>Pseudomonadati</taxon>
        <taxon>Pseudomonadota</taxon>
        <taxon>Betaproteobacteria</taxon>
        <taxon>Burkholderiales</taxon>
        <taxon>Alcaligenaceae</taxon>
        <taxon>Bordetella</taxon>
    </lineage>
</organism>
<comment type="function">
    <text evidence="1">Functions in complex with FlhC as a master transcriptional regulator that regulates transcription of several flagellar and non-flagellar operons by binding to their promoter region. Activates expression of class 2 flagellar genes, including fliA, which is a flagellum-specific sigma factor that turns on the class 3 genes. Also regulates genes whose products function in a variety of physiological pathways.</text>
</comment>
<comment type="subunit">
    <text evidence="1">Homodimer; disulfide-linked. Forms a heterohexamer composed of two FlhC and four FlhD subunits. Each FlhC binds a FlhD dimer, forming a heterotrimer, and a hexamer assembles by dimerization of two heterotrimers.</text>
</comment>
<comment type="subcellular location">
    <subcellularLocation>
        <location evidence="1">Cytoplasm</location>
    </subcellularLocation>
</comment>
<comment type="domain">
    <text evidence="1">The C-terminal region contains a putative helix-turn-helix (HTH) motif, suggesting that this region may bind DNA.</text>
</comment>
<comment type="similarity">
    <text evidence="1">Belongs to the FlhD family.</text>
</comment>
<reference key="1">
    <citation type="journal article" date="1995" name="Cell">
        <title>Ectopic expression of the flagellar regulon alters development of the Bordetella-host interaction.</title>
        <authorList>
            <person name="Akerley B.J."/>
            <person name="Cotter P.A."/>
            <person name="Miller J.F."/>
        </authorList>
    </citation>
    <scope>NUCLEOTIDE SEQUENCE [GENOMIC DNA]</scope>
    <source>
        <strain>GP1SN</strain>
    </source>
</reference>
<reference key="2">
    <citation type="journal article" date="2003" name="Nat. Genet.">
        <title>Comparative analysis of the genome sequences of Bordetella pertussis, Bordetella parapertussis and Bordetella bronchiseptica.</title>
        <authorList>
            <person name="Parkhill J."/>
            <person name="Sebaihia M."/>
            <person name="Preston A."/>
            <person name="Murphy L.D."/>
            <person name="Thomson N.R."/>
            <person name="Harris D.E."/>
            <person name="Holden M.T.G."/>
            <person name="Churcher C.M."/>
            <person name="Bentley S.D."/>
            <person name="Mungall K.L."/>
            <person name="Cerdeno-Tarraga A.-M."/>
            <person name="Temple L."/>
            <person name="James K.D."/>
            <person name="Harris B."/>
            <person name="Quail M.A."/>
            <person name="Achtman M."/>
            <person name="Atkin R."/>
            <person name="Baker S."/>
            <person name="Basham D."/>
            <person name="Bason N."/>
            <person name="Cherevach I."/>
            <person name="Chillingworth T."/>
            <person name="Collins M."/>
            <person name="Cronin A."/>
            <person name="Davis P."/>
            <person name="Doggett J."/>
            <person name="Feltwell T."/>
            <person name="Goble A."/>
            <person name="Hamlin N."/>
            <person name="Hauser H."/>
            <person name="Holroyd S."/>
            <person name="Jagels K."/>
            <person name="Leather S."/>
            <person name="Moule S."/>
            <person name="Norberczak H."/>
            <person name="O'Neil S."/>
            <person name="Ormond D."/>
            <person name="Price C."/>
            <person name="Rabbinowitsch E."/>
            <person name="Rutter S."/>
            <person name="Sanders M."/>
            <person name="Saunders D."/>
            <person name="Seeger K."/>
            <person name="Sharp S."/>
            <person name="Simmonds M."/>
            <person name="Skelton J."/>
            <person name="Squares R."/>
            <person name="Squares S."/>
            <person name="Stevens K."/>
            <person name="Unwin L."/>
            <person name="Whitehead S."/>
            <person name="Barrell B.G."/>
            <person name="Maskell D.J."/>
        </authorList>
    </citation>
    <scope>NUCLEOTIDE SEQUENCE [LARGE SCALE GENOMIC DNA]</scope>
    <source>
        <strain>ATCC BAA-588 / NCTC 13252 / RB50</strain>
    </source>
</reference>
<keyword id="KW-0010">Activator</keyword>
<keyword id="KW-1005">Bacterial flagellum biogenesis</keyword>
<keyword id="KW-0963">Cytoplasm</keyword>
<keyword id="KW-1015">Disulfide bond</keyword>
<keyword id="KW-0238">DNA-binding</keyword>
<keyword id="KW-0804">Transcription</keyword>
<keyword id="KW-0805">Transcription regulation</keyword>
<evidence type="ECO:0000255" key="1">
    <source>
        <dbReference type="HAMAP-Rule" id="MF_00725"/>
    </source>
</evidence>
<name>FLHD_BORBR</name>
<dbReference type="EMBL" id="U17998">
    <property type="protein sequence ID" value="AAA69519.1"/>
    <property type="molecule type" value="Genomic_DNA"/>
</dbReference>
<dbReference type="EMBL" id="BX640444">
    <property type="protein sequence ID" value="CAE33035.1"/>
    <property type="molecule type" value="Genomic_DNA"/>
</dbReference>
<dbReference type="RefSeq" id="WP_003811931.1">
    <property type="nucleotide sequence ID" value="NC_002927.3"/>
</dbReference>
<dbReference type="SMR" id="Q44730"/>
<dbReference type="GeneID" id="93203226"/>
<dbReference type="KEGG" id="bbr:BB2541"/>
<dbReference type="eggNOG" id="ENOG5031P80">
    <property type="taxonomic scope" value="Bacteria"/>
</dbReference>
<dbReference type="HOGENOM" id="CLU_144160_1_0_4"/>
<dbReference type="Proteomes" id="UP000001027">
    <property type="component" value="Chromosome"/>
</dbReference>
<dbReference type="GO" id="GO:0005737">
    <property type="term" value="C:cytoplasm"/>
    <property type="evidence" value="ECO:0007669"/>
    <property type="project" value="UniProtKB-SubCell"/>
</dbReference>
<dbReference type="GO" id="GO:0003677">
    <property type="term" value="F:DNA binding"/>
    <property type="evidence" value="ECO:0007669"/>
    <property type="project" value="UniProtKB-UniRule"/>
</dbReference>
<dbReference type="GO" id="GO:0044780">
    <property type="term" value="P:bacterial-type flagellum assembly"/>
    <property type="evidence" value="ECO:0007669"/>
    <property type="project" value="InterPro"/>
</dbReference>
<dbReference type="GO" id="GO:0045893">
    <property type="term" value="P:positive regulation of DNA-templated transcription"/>
    <property type="evidence" value="ECO:0007669"/>
    <property type="project" value="InterPro"/>
</dbReference>
<dbReference type="GO" id="GO:1902208">
    <property type="term" value="P:regulation of bacterial-type flagellum assembly"/>
    <property type="evidence" value="ECO:0007669"/>
    <property type="project" value="UniProtKB-UniRule"/>
</dbReference>
<dbReference type="Gene3D" id="1.10.4000.10">
    <property type="entry name" value="Flagellar transcriptional activator FlhD"/>
    <property type="match status" value="1"/>
</dbReference>
<dbReference type="HAMAP" id="MF_00725">
    <property type="entry name" value="FlhD"/>
    <property type="match status" value="1"/>
</dbReference>
<dbReference type="InterPro" id="IPR023559">
    <property type="entry name" value="Flagellar_FlhD"/>
</dbReference>
<dbReference type="InterPro" id="IPR036194">
    <property type="entry name" value="FlhD_sf"/>
</dbReference>
<dbReference type="NCBIfam" id="NF002783">
    <property type="entry name" value="PRK02909.1-1"/>
    <property type="match status" value="1"/>
</dbReference>
<dbReference type="Pfam" id="PF05247">
    <property type="entry name" value="FlhD"/>
    <property type="match status" value="1"/>
</dbReference>
<dbReference type="SUPFAM" id="SSF63592">
    <property type="entry name" value="Flagellar transcriptional activator FlhD"/>
    <property type="match status" value="1"/>
</dbReference>
<sequence>MKTADSSLLADIREVNLSYLLLAQRMLRDDYAASMFRLGFSNEVADILMRLSPAQLVKLASSSSLLCRFRFDDYSLLSALTQDVLGGALQQAHATILLARQPVEELA</sequence>
<feature type="chain" id="PRO_0000182710" description="Flagellar transcriptional regulator FlhD">
    <location>
        <begin position="1"/>
        <end position="107"/>
    </location>
</feature>
<feature type="disulfide bond" description="Interchain" evidence="1">
    <location>
        <position position="67"/>
    </location>
</feature>
<proteinExistence type="inferred from homology"/>
<gene>
    <name evidence="1" type="primary">flhD</name>
    <name type="synonym">frlA</name>
    <name type="ordered locus">BB2541</name>
</gene>